<proteinExistence type="inferred from homology"/>
<evidence type="ECO:0000250" key="1">
    <source>
        <dbReference type="UniProtKB" id="P11387"/>
    </source>
</evidence>
<evidence type="ECO:0000255" key="2">
    <source>
        <dbReference type="PROSITE-ProRule" id="PRU01382"/>
    </source>
</evidence>
<evidence type="ECO:0000255" key="3">
    <source>
        <dbReference type="PROSITE-ProRule" id="PRU10130"/>
    </source>
</evidence>
<evidence type="ECO:0000255" key="4">
    <source>
        <dbReference type="RuleBase" id="RU365101"/>
    </source>
</evidence>
<evidence type="ECO:0000256" key="5">
    <source>
        <dbReference type="SAM" id="MobiDB-lite"/>
    </source>
</evidence>
<evidence type="ECO:0000305" key="6"/>
<organism>
    <name type="scientific">Candidozyma auris</name>
    <name type="common">Yeast</name>
    <name type="synonym">Candida auris</name>
    <dbReference type="NCBI Taxonomy" id="498019"/>
    <lineage>
        <taxon>Eukaryota</taxon>
        <taxon>Fungi</taxon>
        <taxon>Dikarya</taxon>
        <taxon>Ascomycota</taxon>
        <taxon>Saccharomycotina</taxon>
        <taxon>Pichiomycetes</taxon>
        <taxon>Metschnikowiaceae</taxon>
        <taxon>Candidozyma</taxon>
    </lineage>
</organism>
<feature type="chain" id="PRO_0000447628" description="DNA topoisomerase 1">
    <location>
        <begin position="1"/>
        <end position="749"/>
    </location>
</feature>
<feature type="domain" description="Topo IB-type catalytic" evidence="2">
    <location>
        <begin position="345"/>
        <end position="749"/>
    </location>
</feature>
<feature type="region of interest" description="Disordered" evidence="5">
    <location>
        <begin position="1"/>
        <end position="110"/>
    </location>
</feature>
<feature type="region of interest" description="Interaction with DNA" evidence="1">
    <location>
        <begin position="338"/>
        <end position="339"/>
    </location>
</feature>
<feature type="region of interest" description="Interaction with DNA" evidence="1">
    <location>
        <begin position="401"/>
        <end position="406"/>
    </location>
</feature>
<feature type="region of interest" description="Interaction with DNA" evidence="1">
    <location>
        <begin position="493"/>
        <end position="495"/>
    </location>
</feature>
<feature type="compositionally biased region" description="Basic and acidic residues" evidence="5">
    <location>
        <begin position="62"/>
        <end position="75"/>
    </location>
</feature>
<feature type="compositionally biased region" description="Low complexity" evidence="5">
    <location>
        <begin position="79"/>
        <end position="94"/>
    </location>
</feature>
<feature type="compositionally biased region" description="Basic and acidic residues" evidence="5">
    <location>
        <begin position="101"/>
        <end position="110"/>
    </location>
</feature>
<feature type="active site" description="O-(3'-phospho-DNA)-tyrosine intermediate" evidence="2 3">
    <location>
        <position position="707"/>
    </location>
</feature>
<feature type="site" description="Interaction with DNA" evidence="1">
    <location>
        <position position="277"/>
    </location>
</feature>
<feature type="site" description="Interaction with DNA" evidence="1">
    <location>
        <position position="325"/>
    </location>
</feature>
<feature type="site" description="Interaction with DNA" evidence="1">
    <location>
        <position position="356"/>
    </location>
</feature>
<feature type="site" description="Interaction with DNA" evidence="1">
    <location>
        <position position="413"/>
    </location>
</feature>
<feature type="site" description="Interaction with DNA" evidence="1">
    <location>
        <position position="439"/>
    </location>
</feature>
<feature type="site" description="Interaction with DNA" evidence="1">
    <location>
        <position position="482"/>
    </location>
</feature>
<feature type="site" description="Interaction with DNA" evidence="1">
    <location>
        <position position="539"/>
    </location>
</feature>
<feature type="site" description="Interaction with DNA" evidence="1">
    <location>
        <position position="557"/>
    </location>
</feature>
<gene>
    <name type="primary">TOP1</name>
    <name type="ORF">QG37_01781</name>
</gene>
<comment type="function">
    <text evidence="4">Releases the supercoiling and torsional tension of DNA introduced during the DNA replication and transcription by transiently cleaving and rejoining one strand of the DNA duplex. Introduces a single-strand break via transesterification at the specific target site 5'-[CT]CCTTp site in duplex DNA. The scissile phosphodiester is attacked by the catalytic tyrosine of the enzyme, resulting in the formation of a DNA-(3'-phosphotyrosyl)-enzyme intermediate and the expulsion of a 5'-OH DNA strand. The free DNA strand then undergoes passage around the unbroken strand thus removing DNA supercoils. Finally, in the religation step, the DNA 5'-OH attacks the covalent intermediate to expel the active-site tyrosine and restore the DNA phosphodiester backbone.</text>
</comment>
<comment type="catalytic activity">
    <reaction evidence="3">
        <text>ATP-independent breakage of single-stranded DNA, followed by passage and rejoining.</text>
        <dbReference type="EC" id="5.6.2.1"/>
    </reaction>
</comment>
<comment type="subcellular location">
    <subcellularLocation>
        <location evidence="1">Nucleus</location>
        <location evidence="1">Nucleolus</location>
    </subcellularLocation>
    <subcellularLocation>
        <location evidence="1">Nucleus</location>
        <location evidence="1">Nucleoplasm</location>
    </subcellularLocation>
</comment>
<comment type="similarity">
    <text evidence="6">Belongs to the type IB topoisomerase family.</text>
</comment>
<accession>A0A0L0P4F8</accession>
<dbReference type="EC" id="5.6.2.1" evidence="3"/>
<dbReference type="EMBL" id="LGST01000016">
    <property type="protein sequence ID" value="KNE00911.1"/>
    <property type="molecule type" value="Genomic_DNA"/>
</dbReference>
<dbReference type="RefSeq" id="XP_018170634.1">
    <property type="nucleotide sequence ID" value="XM_018311275.1"/>
</dbReference>
<dbReference type="SMR" id="A0A0L0P4F8"/>
<dbReference type="VEuPathDB" id="FungiDB:B9J08_003421"/>
<dbReference type="VEuPathDB" id="FungiDB:CJI96_0002046"/>
<dbReference type="VEuPathDB" id="FungiDB:CJI97_003496"/>
<dbReference type="VEuPathDB" id="FungiDB:CJJ07_001114"/>
<dbReference type="VEuPathDB" id="FungiDB:CJJ09_000684"/>
<dbReference type="VEuPathDB" id="FungiDB:QG37_01781"/>
<dbReference type="Proteomes" id="UP000037122">
    <property type="component" value="Unassembled WGS sequence"/>
</dbReference>
<dbReference type="GO" id="GO:0005694">
    <property type="term" value="C:chromosome"/>
    <property type="evidence" value="ECO:0007669"/>
    <property type="project" value="InterPro"/>
</dbReference>
<dbReference type="GO" id="GO:0005730">
    <property type="term" value="C:nucleolus"/>
    <property type="evidence" value="ECO:0007669"/>
    <property type="project" value="UniProtKB-SubCell"/>
</dbReference>
<dbReference type="GO" id="GO:0005654">
    <property type="term" value="C:nucleoplasm"/>
    <property type="evidence" value="ECO:0007669"/>
    <property type="project" value="UniProtKB-SubCell"/>
</dbReference>
<dbReference type="GO" id="GO:0003677">
    <property type="term" value="F:DNA binding"/>
    <property type="evidence" value="ECO:0007669"/>
    <property type="project" value="UniProtKB-KW"/>
</dbReference>
<dbReference type="GO" id="GO:0003917">
    <property type="term" value="F:DNA topoisomerase type I (single strand cut, ATP-independent) activity"/>
    <property type="evidence" value="ECO:0007669"/>
    <property type="project" value="UniProtKB-EC"/>
</dbReference>
<dbReference type="GO" id="GO:0007059">
    <property type="term" value="P:chromosome segregation"/>
    <property type="evidence" value="ECO:0007669"/>
    <property type="project" value="TreeGrafter"/>
</dbReference>
<dbReference type="GO" id="GO:0006260">
    <property type="term" value="P:DNA replication"/>
    <property type="evidence" value="ECO:0007669"/>
    <property type="project" value="TreeGrafter"/>
</dbReference>
<dbReference type="GO" id="GO:0006265">
    <property type="term" value="P:DNA topological change"/>
    <property type="evidence" value="ECO:0007669"/>
    <property type="project" value="InterPro"/>
</dbReference>
<dbReference type="CDD" id="cd00659">
    <property type="entry name" value="Topo_IB_C"/>
    <property type="match status" value="1"/>
</dbReference>
<dbReference type="CDD" id="cd03488">
    <property type="entry name" value="Topoisomer_IB_N_htopoI_like"/>
    <property type="match status" value="1"/>
</dbReference>
<dbReference type="FunFam" id="1.10.10.41:FF:000001">
    <property type="entry name" value="DNA topoisomerase I"/>
    <property type="match status" value="1"/>
</dbReference>
<dbReference type="FunFam" id="1.10.132.10:FF:000003">
    <property type="entry name" value="DNA topoisomerase I"/>
    <property type="match status" value="1"/>
</dbReference>
<dbReference type="FunFam" id="2.170.11.10:FF:000001">
    <property type="entry name" value="DNA topoisomerase I"/>
    <property type="match status" value="1"/>
</dbReference>
<dbReference type="FunFam" id="3.90.15.10:FF:000002">
    <property type="entry name" value="DNA topoisomerase I"/>
    <property type="match status" value="1"/>
</dbReference>
<dbReference type="Gene3D" id="1.10.132.10">
    <property type="match status" value="1"/>
</dbReference>
<dbReference type="Gene3D" id="2.170.11.10">
    <property type="entry name" value="DNA Topoisomerase I, domain 2"/>
    <property type="match status" value="1"/>
</dbReference>
<dbReference type="Gene3D" id="3.90.15.10">
    <property type="entry name" value="Topoisomerase I, Chain A, domain 3"/>
    <property type="match status" value="1"/>
</dbReference>
<dbReference type="Gene3D" id="1.10.10.41">
    <property type="entry name" value="Yeast DNA topoisomerase - domain 1"/>
    <property type="match status" value="1"/>
</dbReference>
<dbReference type="InterPro" id="IPR011010">
    <property type="entry name" value="DNA_brk_join_enz"/>
</dbReference>
<dbReference type="InterPro" id="IPR013034">
    <property type="entry name" value="DNA_topo_DNA_db_N_dom1"/>
</dbReference>
<dbReference type="InterPro" id="IPR013030">
    <property type="entry name" value="DNA_topo_DNA_db_N_dom2"/>
</dbReference>
<dbReference type="InterPro" id="IPR001631">
    <property type="entry name" value="TopoI"/>
</dbReference>
<dbReference type="InterPro" id="IPR025834">
    <property type="entry name" value="TopoI_C_dom"/>
</dbReference>
<dbReference type="InterPro" id="IPR014711">
    <property type="entry name" value="TopoI_cat_a-hlx-sub_euk"/>
</dbReference>
<dbReference type="InterPro" id="IPR014727">
    <property type="entry name" value="TopoI_cat_a/b-sub_euk"/>
</dbReference>
<dbReference type="InterPro" id="IPR013500">
    <property type="entry name" value="TopoI_cat_euk"/>
</dbReference>
<dbReference type="InterPro" id="IPR008336">
    <property type="entry name" value="TopoI_DNA-bd_euk"/>
</dbReference>
<dbReference type="InterPro" id="IPR036202">
    <property type="entry name" value="TopoI_DNA-bd_euk_N_sf"/>
</dbReference>
<dbReference type="InterPro" id="IPR013499">
    <property type="entry name" value="TopoI_euk"/>
</dbReference>
<dbReference type="InterPro" id="IPR018521">
    <property type="entry name" value="TopoIB_AS"/>
</dbReference>
<dbReference type="InterPro" id="IPR048045">
    <property type="entry name" value="Topoisomer_I_DNA-bd"/>
</dbReference>
<dbReference type="InterPro" id="IPR051062">
    <property type="entry name" value="Topoisomerase_IB"/>
</dbReference>
<dbReference type="PANTHER" id="PTHR10290:SF3">
    <property type="entry name" value="DNA TOPOISOMERASE 1"/>
    <property type="match status" value="1"/>
</dbReference>
<dbReference type="PANTHER" id="PTHR10290">
    <property type="entry name" value="DNA TOPOISOMERASE I"/>
    <property type="match status" value="1"/>
</dbReference>
<dbReference type="Pfam" id="PF14370">
    <property type="entry name" value="Topo_C_assoc"/>
    <property type="match status" value="1"/>
</dbReference>
<dbReference type="Pfam" id="PF01028">
    <property type="entry name" value="Topoisom_I"/>
    <property type="match status" value="1"/>
</dbReference>
<dbReference type="Pfam" id="PF02919">
    <property type="entry name" value="Topoisom_I_N"/>
    <property type="match status" value="1"/>
</dbReference>
<dbReference type="PRINTS" id="PR00416">
    <property type="entry name" value="EUTPISMRASEI"/>
</dbReference>
<dbReference type="SMART" id="SM00435">
    <property type="entry name" value="TOPEUc"/>
    <property type="match status" value="1"/>
</dbReference>
<dbReference type="SUPFAM" id="SSF56349">
    <property type="entry name" value="DNA breaking-rejoining enzymes"/>
    <property type="match status" value="1"/>
</dbReference>
<dbReference type="SUPFAM" id="SSF56741">
    <property type="entry name" value="Eukaryotic DNA topoisomerase I, N-terminal DNA-binding fragment"/>
    <property type="match status" value="1"/>
</dbReference>
<dbReference type="PROSITE" id="PS00176">
    <property type="entry name" value="TOPO_IB_1"/>
    <property type="match status" value="1"/>
</dbReference>
<dbReference type="PROSITE" id="PS52038">
    <property type="entry name" value="TOPO_IB_2"/>
    <property type="match status" value="1"/>
</dbReference>
<protein>
    <recommendedName>
        <fullName evidence="6">DNA topoisomerase 1</fullName>
        <ecNumber evidence="3">5.6.2.1</ecNumber>
    </recommendedName>
    <alternativeName>
        <fullName evidence="6">DNA topoisomerase I</fullName>
    </alternativeName>
</protein>
<reference key="1">
    <citation type="journal article" date="2015" name="BMC Genomics">
        <title>Draft genome of a commonly misdiagnosed multidrug resistant pathogen Candida auris.</title>
        <authorList>
            <person name="Chatterjee S."/>
            <person name="Alampalli S.V."/>
            <person name="Nageshan R.K."/>
            <person name="Chettiar S.T."/>
            <person name="Joshi S."/>
            <person name="Tatu U.S."/>
        </authorList>
    </citation>
    <scope>NUCLEOTIDE SEQUENCE [LARGE SCALE GENOMIC DNA]</scope>
    <source>
        <strain>6684</strain>
    </source>
</reference>
<sequence>MSDSEDVALSELSSRNGIKKEDEEMPLAQLNGNGNAKLRKRKHSEKSKDDHKDKKRKKEKKLSKEKVNNKVKDELISAPVTPKKTPKISKTPVSATSSPAPKKEDSVETDEGYKWWEDENFGEGDERWQTLEHNGVLFPPPYEPLPSYVKLYYEGKPVDLPPLAEEVAGYFAAMIETDHAKNPVFQQNFFNDFLQVLKEGGGCNVDIKEFSKCDFSKMAAFFEKQREEKKSMSKAEKQRIKEEKEKLEEPFKTCLMDGRRENVGNFRVEPPGLFRGRGAHPKTGKFKRRVFPEDITLNLGEGAPIPPPPEGHQWGGIRHDKTVVWLAMWRENISDTFKYVKLAANSSIKGISDMKKFETARKLKDHIERIRADYQKMLKDQFMQNRQIATATYLIDIFALRAGGEKGEDEADTVGCCSLRYEHVTLKPPNKVIFDFLGKDSIRFYQEVEVDRQVFKNLRIFKKEPKGPGDDLFDRITPTILNKHLQNYMKGLTAKVFRTYNASKTMQDQMDLISNEGTVAEKVVKYNAANRTVAILCNHQRTVSKNHEQAVKRINDKIRELEWQKIRLKKMILDIDETEKKDNPKYFEELDDLTNDEMNVIVERVIERQKDQAEKKWNRDNEKRKMEKEELLTKADLQEKLDKIEETRKDYLEEIKTGVVRATKGSSVSSLKSKVETVENRIVNTSYQLKDKEDNSEVSLGTSKMNYIDPRLTVVFAKKFNVPIEKLFTKTLRDKFNWAIESTDENWRF</sequence>
<keyword id="KW-0238">DNA-binding</keyword>
<keyword id="KW-0413">Isomerase</keyword>
<keyword id="KW-0539">Nucleus</keyword>
<keyword id="KW-0799">Topoisomerase</keyword>
<name>TOP1_CANAR</name>